<accession>P0DC24</accession>
<accession>Q878F6</accession>
<accession>Q8K884</accession>
<proteinExistence type="inferred from homology"/>
<gene>
    <name evidence="1" type="primary">lgt</name>
    <name type="ordered locus">SpyM3_0413</name>
</gene>
<comment type="function">
    <text evidence="1">Catalyzes the transfer of the diacylglyceryl group from phosphatidylglycerol to the sulfhydryl group of the N-terminal cysteine of a prolipoprotein, the first step in the formation of mature lipoproteins.</text>
</comment>
<comment type="catalytic activity">
    <reaction evidence="1">
        <text>L-cysteinyl-[prolipoprotein] + a 1,2-diacyl-sn-glycero-3-phospho-(1'-sn-glycerol) = an S-1,2-diacyl-sn-glyceryl-L-cysteinyl-[prolipoprotein] + sn-glycerol 1-phosphate + H(+)</text>
        <dbReference type="Rhea" id="RHEA:56712"/>
        <dbReference type="Rhea" id="RHEA-COMP:14679"/>
        <dbReference type="Rhea" id="RHEA-COMP:14680"/>
        <dbReference type="ChEBI" id="CHEBI:15378"/>
        <dbReference type="ChEBI" id="CHEBI:29950"/>
        <dbReference type="ChEBI" id="CHEBI:57685"/>
        <dbReference type="ChEBI" id="CHEBI:64716"/>
        <dbReference type="ChEBI" id="CHEBI:140658"/>
        <dbReference type="EC" id="2.5.1.145"/>
    </reaction>
</comment>
<comment type="pathway">
    <text evidence="1">Protein modification; lipoprotein biosynthesis (diacylglyceryl transfer).</text>
</comment>
<comment type="subcellular location">
    <subcellularLocation>
        <location evidence="1">Cell membrane</location>
        <topology evidence="1">Multi-pass membrane protein</topology>
    </subcellularLocation>
</comment>
<comment type="similarity">
    <text evidence="1">Belongs to the Lgt family.</text>
</comment>
<keyword id="KW-1003">Cell membrane</keyword>
<keyword id="KW-0472">Membrane</keyword>
<keyword id="KW-0808">Transferase</keyword>
<keyword id="KW-0812">Transmembrane</keyword>
<keyword id="KW-1133">Transmembrane helix</keyword>
<dbReference type="EC" id="2.5.1.145" evidence="1"/>
<dbReference type="EMBL" id="AE014074">
    <property type="protein sequence ID" value="AAM79020.1"/>
    <property type="molecule type" value="Genomic_DNA"/>
</dbReference>
<dbReference type="RefSeq" id="WP_011054293.1">
    <property type="nucleotide sequence ID" value="NC_004070.1"/>
</dbReference>
<dbReference type="SMR" id="P0DC24"/>
<dbReference type="KEGG" id="spg:SpyM3_0413"/>
<dbReference type="HOGENOM" id="CLU_013386_0_1_9"/>
<dbReference type="UniPathway" id="UPA00664"/>
<dbReference type="Proteomes" id="UP000000564">
    <property type="component" value="Chromosome"/>
</dbReference>
<dbReference type="GO" id="GO:0005886">
    <property type="term" value="C:plasma membrane"/>
    <property type="evidence" value="ECO:0007669"/>
    <property type="project" value="UniProtKB-SubCell"/>
</dbReference>
<dbReference type="GO" id="GO:0008961">
    <property type="term" value="F:phosphatidylglycerol-prolipoprotein diacylglyceryl transferase activity"/>
    <property type="evidence" value="ECO:0007669"/>
    <property type="project" value="UniProtKB-UniRule"/>
</dbReference>
<dbReference type="GO" id="GO:0042158">
    <property type="term" value="P:lipoprotein biosynthetic process"/>
    <property type="evidence" value="ECO:0007669"/>
    <property type="project" value="UniProtKB-UniRule"/>
</dbReference>
<dbReference type="HAMAP" id="MF_01147">
    <property type="entry name" value="Lgt"/>
    <property type="match status" value="1"/>
</dbReference>
<dbReference type="InterPro" id="IPR001640">
    <property type="entry name" value="Lgt"/>
</dbReference>
<dbReference type="NCBIfam" id="TIGR00544">
    <property type="entry name" value="lgt"/>
    <property type="match status" value="1"/>
</dbReference>
<dbReference type="PANTHER" id="PTHR30589:SF0">
    <property type="entry name" value="PHOSPHATIDYLGLYCEROL--PROLIPOPROTEIN DIACYLGLYCERYL TRANSFERASE"/>
    <property type="match status" value="1"/>
</dbReference>
<dbReference type="PANTHER" id="PTHR30589">
    <property type="entry name" value="PROLIPOPROTEIN DIACYLGLYCERYL TRANSFERASE"/>
    <property type="match status" value="1"/>
</dbReference>
<dbReference type="Pfam" id="PF01790">
    <property type="entry name" value="LGT"/>
    <property type="match status" value="1"/>
</dbReference>
<dbReference type="PROSITE" id="PS01311">
    <property type="entry name" value="LGT"/>
    <property type="match status" value="1"/>
</dbReference>
<feature type="chain" id="PRO_0000172691" description="Phosphatidylglycerol--prolipoprotein diacylglyceryl transferase">
    <location>
        <begin position="1"/>
        <end position="259"/>
    </location>
</feature>
<feature type="transmembrane region" description="Helical" evidence="1">
    <location>
        <begin position="12"/>
        <end position="32"/>
    </location>
</feature>
<feature type="transmembrane region" description="Helical" evidence="1">
    <location>
        <begin position="41"/>
        <end position="61"/>
    </location>
</feature>
<feature type="transmembrane region" description="Helical" evidence="1">
    <location>
        <begin position="80"/>
        <end position="100"/>
    </location>
</feature>
<feature type="transmembrane region" description="Helical" evidence="1">
    <location>
        <begin position="109"/>
        <end position="129"/>
    </location>
</feature>
<feature type="transmembrane region" description="Helical" evidence="1">
    <location>
        <begin position="167"/>
        <end position="187"/>
    </location>
</feature>
<feature type="transmembrane region" description="Helical" evidence="1">
    <location>
        <begin position="194"/>
        <end position="214"/>
    </location>
</feature>
<feature type="transmembrane region" description="Helical" evidence="1">
    <location>
        <begin position="226"/>
        <end position="246"/>
    </location>
</feature>
<feature type="binding site" evidence="1">
    <location>
        <position position="131"/>
    </location>
    <ligand>
        <name>a 1,2-diacyl-sn-glycero-3-phospho-(1'-sn-glycerol)</name>
        <dbReference type="ChEBI" id="CHEBI:64716"/>
    </ligand>
</feature>
<protein>
    <recommendedName>
        <fullName evidence="1">Phosphatidylglycerol--prolipoprotein diacylglyceryl transferase</fullName>
        <ecNumber evidence="1">2.5.1.145</ecNumber>
    </recommendedName>
</protein>
<organism>
    <name type="scientific">Streptococcus pyogenes serotype M3 (strain ATCC BAA-595 / MGAS315)</name>
    <dbReference type="NCBI Taxonomy" id="198466"/>
    <lineage>
        <taxon>Bacteria</taxon>
        <taxon>Bacillati</taxon>
        <taxon>Bacillota</taxon>
        <taxon>Bacilli</taxon>
        <taxon>Lactobacillales</taxon>
        <taxon>Streptococcaceae</taxon>
        <taxon>Streptococcus</taxon>
    </lineage>
</organism>
<evidence type="ECO:0000255" key="1">
    <source>
        <dbReference type="HAMAP-Rule" id="MF_01147"/>
    </source>
</evidence>
<name>LGT_STRP3</name>
<sequence>MINPIALKCGPLAIHWYALCILSGLVLAVYLASKEAPKKGISSDAIFDFILIAFPLAIVGARIYYVIFEWSYYVKHLDEIIAIWNGGIAIYGGLITGALVLLAYCYNKVLNPIHFLDIAAPSVMAAQAIGRWGNFINQEAYGKAVSQLNYLPSFIQKQMFIEGSYRIPTFLYESFWNLLGFVIIMMWRRKPKSLLDGEIFAFYLIWYGSGRLVIEGMRTDSLMFLGIRISQYVSALLIIIGLIFVIKRRRQKGISYYQE</sequence>
<reference key="1">
    <citation type="journal article" date="2002" name="Proc. Natl. Acad. Sci. U.S.A.">
        <title>Genome sequence of a serotype M3 strain of group A Streptococcus: phage-encoded toxins, the high-virulence phenotype, and clone emergence.</title>
        <authorList>
            <person name="Beres S.B."/>
            <person name="Sylva G.L."/>
            <person name="Barbian K.D."/>
            <person name="Lei B."/>
            <person name="Hoff J.S."/>
            <person name="Mammarella N.D."/>
            <person name="Liu M.-Y."/>
            <person name="Smoot J.C."/>
            <person name="Porcella S.F."/>
            <person name="Parkins L.D."/>
            <person name="Campbell D.S."/>
            <person name="Smith T.M."/>
            <person name="McCormick J.K."/>
            <person name="Leung D.Y.M."/>
            <person name="Schlievert P.M."/>
            <person name="Musser J.M."/>
        </authorList>
    </citation>
    <scope>NUCLEOTIDE SEQUENCE [LARGE SCALE GENOMIC DNA]</scope>
    <source>
        <strain>ATCC BAA-595 / MGAS315</strain>
    </source>
</reference>